<organism>
    <name type="scientific">Bacteroides thetaiotaomicron (strain ATCC 29148 / DSM 2079 / JCM 5827 / CCUG 10774 / NCTC 10582 / VPI-5482 / E50)</name>
    <dbReference type="NCBI Taxonomy" id="226186"/>
    <lineage>
        <taxon>Bacteria</taxon>
        <taxon>Pseudomonadati</taxon>
        <taxon>Bacteroidota</taxon>
        <taxon>Bacteroidia</taxon>
        <taxon>Bacteroidales</taxon>
        <taxon>Bacteroidaceae</taxon>
        <taxon>Bacteroides</taxon>
    </lineage>
</organism>
<reference key="1">
    <citation type="journal article" date="2003" name="Science">
        <title>A genomic view of the human-Bacteroides thetaiotaomicron symbiosis.</title>
        <authorList>
            <person name="Xu J."/>
            <person name="Bjursell M.K."/>
            <person name="Himrod J."/>
            <person name="Deng S."/>
            <person name="Carmichael L.K."/>
            <person name="Chiang H.C."/>
            <person name="Hooper L.V."/>
            <person name="Gordon J.I."/>
        </authorList>
    </citation>
    <scope>NUCLEOTIDE SEQUENCE [LARGE SCALE GENOMIC DNA]</scope>
    <source>
        <strain>ATCC 29148 / DSM 2079 / JCM 5827 / CCUG 10774 / NCTC 10582 / VPI-5482 / E50</strain>
    </source>
</reference>
<dbReference type="EC" id="5.3.1.4" evidence="1"/>
<dbReference type="EMBL" id="AE015928">
    <property type="protein sequence ID" value="AAO75458.1"/>
    <property type="molecule type" value="Genomic_DNA"/>
</dbReference>
<dbReference type="RefSeq" id="NP_809264.1">
    <property type="nucleotide sequence ID" value="NC_004663.1"/>
</dbReference>
<dbReference type="RefSeq" id="WP_008760642.1">
    <property type="nucleotide sequence ID" value="NZ_UYXG01000016.1"/>
</dbReference>
<dbReference type="SMR" id="Q8AAW1"/>
<dbReference type="FunCoup" id="Q8AAW1">
    <property type="interactions" value="55"/>
</dbReference>
<dbReference type="STRING" id="226186.BT_0351"/>
<dbReference type="PaxDb" id="226186-BT_0351"/>
<dbReference type="EnsemblBacteria" id="AAO75458">
    <property type="protein sequence ID" value="AAO75458"/>
    <property type="gene ID" value="BT_0351"/>
</dbReference>
<dbReference type="GeneID" id="60926311"/>
<dbReference type="KEGG" id="bth:BT_0351"/>
<dbReference type="PATRIC" id="fig|226186.12.peg.350"/>
<dbReference type="eggNOG" id="COG2160">
    <property type="taxonomic scope" value="Bacteria"/>
</dbReference>
<dbReference type="HOGENOM" id="CLU_045663_0_0_10"/>
<dbReference type="InParanoid" id="Q8AAW1"/>
<dbReference type="OrthoDB" id="9765600at2"/>
<dbReference type="BRENDA" id="5.3.1.4">
    <property type="organism ID" value="709"/>
</dbReference>
<dbReference type="UniPathway" id="UPA00145">
    <property type="reaction ID" value="UER00565"/>
</dbReference>
<dbReference type="Proteomes" id="UP000001414">
    <property type="component" value="Chromosome"/>
</dbReference>
<dbReference type="GO" id="GO:0005829">
    <property type="term" value="C:cytosol"/>
    <property type="evidence" value="ECO:0000318"/>
    <property type="project" value="GO_Central"/>
</dbReference>
<dbReference type="GO" id="GO:0008733">
    <property type="term" value="F:L-arabinose isomerase activity"/>
    <property type="evidence" value="ECO:0000318"/>
    <property type="project" value="GO_Central"/>
</dbReference>
<dbReference type="GO" id="GO:0030145">
    <property type="term" value="F:manganese ion binding"/>
    <property type="evidence" value="ECO:0007669"/>
    <property type="project" value="UniProtKB-UniRule"/>
</dbReference>
<dbReference type="GO" id="GO:0019569">
    <property type="term" value="P:L-arabinose catabolic process to xylulose 5-phosphate"/>
    <property type="evidence" value="ECO:0000318"/>
    <property type="project" value="GO_Central"/>
</dbReference>
<dbReference type="CDD" id="cd03557">
    <property type="entry name" value="L-arabinose_isomerase"/>
    <property type="match status" value="1"/>
</dbReference>
<dbReference type="FunFam" id="3.40.50.10940:FF:000001">
    <property type="entry name" value="L-arabinose isomerase"/>
    <property type="match status" value="1"/>
</dbReference>
<dbReference type="Gene3D" id="3.40.50.10940">
    <property type="match status" value="1"/>
</dbReference>
<dbReference type="HAMAP" id="MF_00519">
    <property type="entry name" value="Arabinose_Isome"/>
    <property type="match status" value="1"/>
</dbReference>
<dbReference type="InterPro" id="IPR024664">
    <property type="entry name" value="Ara_Isoase_C"/>
</dbReference>
<dbReference type="InterPro" id="IPR055390">
    <property type="entry name" value="AraA_central"/>
</dbReference>
<dbReference type="InterPro" id="IPR055389">
    <property type="entry name" value="AraA_N"/>
</dbReference>
<dbReference type="InterPro" id="IPR038583">
    <property type="entry name" value="AraA_N_sf"/>
</dbReference>
<dbReference type="InterPro" id="IPR004216">
    <property type="entry name" value="Fuc/Ara_isomerase_C"/>
</dbReference>
<dbReference type="InterPro" id="IPR009015">
    <property type="entry name" value="Fucose_isomerase_N/cen_sf"/>
</dbReference>
<dbReference type="InterPro" id="IPR003762">
    <property type="entry name" value="Lara_isomerase"/>
</dbReference>
<dbReference type="NCBIfam" id="NF002795">
    <property type="entry name" value="PRK02929.1"/>
    <property type="match status" value="1"/>
</dbReference>
<dbReference type="PANTHER" id="PTHR38464">
    <property type="entry name" value="L-ARABINOSE ISOMERASE"/>
    <property type="match status" value="1"/>
</dbReference>
<dbReference type="PANTHER" id="PTHR38464:SF1">
    <property type="entry name" value="L-ARABINOSE ISOMERASE"/>
    <property type="match status" value="1"/>
</dbReference>
<dbReference type="Pfam" id="PF24856">
    <property type="entry name" value="AraA_central"/>
    <property type="match status" value="1"/>
</dbReference>
<dbReference type="Pfam" id="PF02610">
    <property type="entry name" value="AraA_N"/>
    <property type="match status" value="1"/>
</dbReference>
<dbReference type="Pfam" id="PF11762">
    <property type="entry name" value="Arabinose_Iso_C"/>
    <property type="match status" value="1"/>
</dbReference>
<dbReference type="PIRSF" id="PIRSF001478">
    <property type="entry name" value="L-ara_isomerase"/>
    <property type="match status" value="1"/>
</dbReference>
<dbReference type="SUPFAM" id="SSF50443">
    <property type="entry name" value="FucI/AraA C-terminal domain-like"/>
    <property type="match status" value="1"/>
</dbReference>
<dbReference type="SUPFAM" id="SSF53743">
    <property type="entry name" value="FucI/AraA N-terminal and middle domains"/>
    <property type="match status" value="1"/>
</dbReference>
<sequence>MNNVFDQYEVWFVTGAQLLYGGDAVIAVDAHSNEMVNGLNESGKLPVKVVYKGTANSSKEVEAVFKAANNDDKCVGVITWMHTFSPAKMWIHGLQQLKKPLLHLHTQFNKEIPWDTMDMDFMNLNQSAHGDREFGHICTRMRIRRKVVVGYWKEEETLHKIAVWMRVCAGWADSQDMLIIRFGDQMNNVAVTDGDKVEAEQRMGYHVDYCPASELMEYHKDIKNADVDALVATYFNDYDHDASLEDKSTEAYQKVWNAAKAELALRAILKAKGAKGFTTNFDDLGQTDGSYFDQIPGLASQRLMAEGYGFGAEGDWKSAALYRTVWVMNQGLPKGCSFLEDYTLNFDGANSSILQSHMLEICPLIAANKPRLEVHFLGIGIRKSQTARLVFTSKTGTGCTATVVDMGNRFRLIVNDVECIEPKPLPKLPVASALWIPMPNLEVGAGAWILAGGTHHSCFSYDLTAEYWEDYAEIAGIEMVHINKDTTISCFKKELRMNEVYYMLNKALC</sequence>
<protein>
    <recommendedName>
        <fullName evidence="1">L-arabinose isomerase</fullName>
        <ecNumber evidence="1">5.3.1.4</ecNumber>
    </recommendedName>
</protein>
<gene>
    <name evidence="1" type="primary">araA</name>
    <name type="ordered locus">BT_0351</name>
</gene>
<comment type="function">
    <text evidence="1">Catalyzes the conversion of L-arabinose to L-ribulose.</text>
</comment>
<comment type="catalytic activity">
    <reaction evidence="1">
        <text>beta-L-arabinopyranose = L-ribulose</text>
        <dbReference type="Rhea" id="RHEA:14821"/>
        <dbReference type="ChEBI" id="CHEBI:16880"/>
        <dbReference type="ChEBI" id="CHEBI:40886"/>
        <dbReference type="EC" id="5.3.1.4"/>
    </reaction>
</comment>
<comment type="cofactor">
    <cofactor evidence="1">
        <name>Mn(2+)</name>
        <dbReference type="ChEBI" id="CHEBI:29035"/>
    </cofactor>
    <text evidence="1">Binds 1 Mn(2+) ion per subunit.</text>
</comment>
<comment type="pathway">
    <text evidence="1">Carbohydrate degradation; L-arabinose degradation via L-ribulose; D-xylulose 5-phosphate from L-arabinose (bacterial route): step 1/3.</text>
</comment>
<comment type="similarity">
    <text evidence="1">Belongs to the arabinose isomerase family.</text>
</comment>
<evidence type="ECO:0000255" key="1">
    <source>
        <dbReference type="HAMAP-Rule" id="MF_00519"/>
    </source>
</evidence>
<feature type="chain" id="PRO_0000312601" description="L-arabinose isomerase">
    <location>
        <begin position="1"/>
        <end position="509"/>
    </location>
</feature>
<feature type="binding site" evidence="1">
    <location>
        <position position="313"/>
    </location>
    <ligand>
        <name>Mn(2+)</name>
        <dbReference type="ChEBI" id="CHEBI:29035"/>
    </ligand>
</feature>
<feature type="binding site" evidence="1">
    <location>
        <position position="340"/>
    </location>
    <ligand>
        <name>Mn(2+)</name>
        <dbReference type="ChEBI" id="CHEBI:29035"/>
    </ligand>
</feature>
<feature type="binding site" evidence="1">
    <location>
        <position position="357"/>
    </location>
    <ligand>
        <name>Mn(2+)</name>
        <dbReference type="ChEBI" id="CHEBI:29035"/>
    </ligand>
</feature>
<feature type="binding site" evidence="1">
    <location>
        <position position="456"/>
    </location>
    <ligand>
        <name>Mn(2+)</name>
        <dbReference type="ChEBI" id="CHEBI:29035"/>
    </ligand>
</feature>
<keyword id="KW-0054">Arabinose catabolism</keyword>
<keyword id="KW-0119">Carbohydrate metabolism</keyword>
<keyword id="KW-0413">Isomerase</keyword>
<keyword id="KW-0464">Manganese</keyword>
<keyword id="KW-0479">Metal-binding</keyword>
<keyword id="KW-1185">Reference proteome</keyword>
<accession>Q8AAW1</accession>
<proteinExistence type="inferred from homology"/>
<name>ARAA_BACTN</name>